<dbReference type="EC" id="3.5.1.110" evidence="1"/>
<dbReference type="EMBL" id="CP001969">
    <property type="protein sequence ID" value="ADE89592.1"/>
    <property type="molecule type" value="Genomic_DNA"/>
</dbReference>
<dbReference type="SMR" id="D5CZH1"/>
<dbReference type="KEGG" id="eih:ECOK1_1063"/>
<dbReference type="PATRIC" id="fig|714962.3.peg.1077"/>
<dbReference type="HOGENOM" id="CLU_068979_8_0_6"/>
<dbReference type="GO" id="GO:0016811">
    <property type="term" value="F:hydrolase activity, acting on carbon-nitrogen (but not peptide) bonds, in linear amides"/>
    <property type="evidence" value="ECO:0007669"/>
    <property type="project" value="UniProtKB-UniRule"/>
</dbReference>
<dbReference type="GO" id="GO:0019740">
    <property type="term" value="P:nitrogen utilization"/>
    <property type="evidence" value="ECO:0007669"/>
    <property type="project" value="UniProtKB-UniRule"/>
</dbReference>
<dbReference type="GO" id="GO:0006212">
    <property type="term" value="P:uracil catabolic process"/>
    <property type="evidence" value="ECO:0007669"/>
    <property type="project" value="UniProtKB-UniRule"/>
</dbReference>
<dbReference type="CDD" id="cd00431">
    <property type="entry name" value="cysteine_hydrolases"/>
    <property type="match status" value="1"/>
</dbReference>
<dbReference type="FunFam" id="3.40.50.850:FF:000004">
    <property type="entry name" value="Peroxyureidoacrylate/ureidoacrylate amidohydrolase RutB"/>
    <property type="match status" value="1"/>
</dbReference>
<dbReference type="Gene3D" id="3.40.50.850">
    <property type="entry name" value="Isochorismatase-like"/>
    <property type="match status" value="1"/>
</dbReference>
<dbReference type="HAMAP" id="MF_00830">
    <property type="entry name" value="RutB"/>
    <property type="match status" value="1"/>
</dbReference>
<dbReference type="InterPro" id="IPR000868">
    <property type="entry name" value="Isochorismatase-like_dom"/>
</dbReference>
<dbReference type="InterPro" id="IPR050272">
    <property type="entry name" value="Isochorismatase-like_hydrls"/>
</dbReference>
<dbReference type="InterPro" id="IPR036380">
    <property type="entry name" value="Isochorismatase-like_sf"/>
</dbReference>
<dbReference type="InterPro" id="IPR019916">
    <property type="entry name" value="RutB"/>
</dbReference>
<dbReference type="NCBIfam" id="TIGR03614">
    <property type="entry name" value="RutB"/>
    <property type="match status" value="1"/>
</dbReference>
<dbReference type="PANTHER" id="PTHR43540:SF6">
    <property type="entry name" value="ISOCHORISMATASE-LIKE DOMAIN-CONTAINING PROTEIN"/>
    <property type="match status" value="1"/>
</dbReference>
<dbReference type="PANTHER" id="PTHR43540">
    <property type="entry name" value="PEROXYUREIDOACRYLATE/UREIDOACRYLATE AMIDOHYDROLASE-RELATED"/>
    <property type="match status" value="1"/>
</dbReference>
<dbReference type="Pfam" id="PF00857">
    <property type="entry name" value="Isochorismatase"/>
    <property type="match status" value="1"/>
</dbReference>
<dbReference type="SUPFAM" id="SSF52499">
    <property type="entry name" value="Isochorismatase-like hydrolases"/>
    <property type="match status" value="1"/>
</dbReference>
<proteinExistence type="inferred from homology"/>
<name>RUTB_ECOKI</name>
<sequence>MMTTLTARPEAITFDPQQTALIVVDMQNAYATPGGYLDLAGFDVSTTRPVIANIQTAVTAARTAGMLIIWFQNGWDEQYVEAGGPGSPNYHKSNALKTMRNQPLLQGKLLAKGSWDYQLVDELVPQPGDIVLPKPRYSGFFNTPLDSILRSRGIRHLVFTGIATNVCVESTLRDGFFLEYFGVVLEDATHQAGPEFAQKAALFNIETFFGWVSDVETFCDALSSTSFARIA</sequence>
<accession>D5CZH1</accession>
<feature type="chain" id="PRO_0000402675" description="Ureidoacrylate amidohydrolase RutB">
    <location>
        <begin position="1"/>
        <end position="231"/>
    </location>
</feature>
<feature type="active site" description="Proton acceptor" evidence="1">
    <location>
        <position position="25"/>
    </location>
</feature>
<feature type="active site" evidence="1">
    <location>
        <position position="134"/>
    </location>
</feature>
<feature type="active site" description="Nucleophile" evidence="1">
    <location>
        <position position="167"/>
    </location>
</feature>
<organism>
    <name type="scientific">Escherichia coli O18:K1:H7 (strain IHE3034 / ExPEC)</name>
    <dbReference type="NCBI Taxonomy" id="714962"/>
    <lineage>
        <taxon>Bacteria</taxon>
        <taxon>Pseudomonadati</taxon>
        <taxon>Pseudomonadota</taxon>
        <taxon>Gammaproteobacteria</taxon>
        <taxon>Enterobacterales</taxon>
        <taxon>Enterobacteriaceae</taxon>
        <taxon>Escherichia</taxon>
    </lineage>
</organism>
<keyword id="KW-0378">Hydrolase</keyword>
<gene>
    <name evidence="1" type="primary">rutB</name>
    <name type="ordered locus">ECOK1_1063</name>
</gene>
<evidence type="ECO:0000255" key="1">
    <source>
        <dbReference type="HAMAP-Rule" id="MF_00830"/>
    </source>
</evidence>
<protein>
    <recommendedName>
        <fullName evidence="1">Ureidoacrylate amidohydrolase RutB</fullName>
        <ecNumber evidence="1">3.5.1.110</ecNumber>
    </recommendedName>
</protein>
<reference key="1">
    <citation type="journal article" date="2010" name="Proc. Natl. Acad. Sci. U.S.A.">
        <title>Identification of protective and broadly conserved vaccine antigens from the genome of extraintestinal pathogenic Escherichia coli.</title>
        <authorList>
            <person name="Moriel D.G."/>
            <person name="Bertoldi I."/>
            <person name="Spagnuolo A."/>
            <person name="Marchi S."/>
            <person name="Rosini R."/>
            <person name="Nesta B."/>
            <person name="Pastorello I."/>
            <person name="Corea V.A."/>
            <person name="Torricelli G."/>
            <person name="Cartocci E."/>
            <person name="Savino S."/>
            <person name="Scarselli M."/>
            <person name="Dobrindt U."/>
            <person name="Hacker J."/>
            <person name="Tettelin H."/>
            <person name="Tallon L.J."/>
            <person name="Sullivan S."/>
            <person name="Wieler L.H."/>
            <person name="Ewers C."/>
            <person name="Pickard D."/>
            <person name="Dougan G."/>
            <person name="Fontana M.R."/>
            <person name="Rappuoli R."/>
            <person name="Pizza M."/>
            <person name="Serino L."/>
        </authorList>
    </citation>
    <scope>NUCLEOTIDE SEQUENCE [LARGE SCALE GENOMIC DNA]</scope>
    <source>
        <strain>IHE3034 / ExPEC</strain>
    </source>
</reference>
<comment type="function">
    <text evidence="1">Hydrolyzes ureidoacrylate to form aminoacrylate and carbamate. The carbamate hydrolyzes spontaneously, thereby releasing one of the nitrogen atoms of the pyrimidine ring as ammonia and one of its carbon atoms as CO2.</text>
</comment>
<comment type="catalytic activity">
    <reaction evidence="1">
        <text>(Z)-3-ureidoacrylate + H2O + H(+) = (Z)-3-aminoacrylate + NH4(+) + CO2</text>
        <dbReference type="Rhea" id="RHEA:42624"/>
        <dbReference type="ChEBI" id="CHEBI:15377"/>
        <dbReference type="ChEBI" id="CHEBI:15378"/>
        <dbReference type="ChEBI" id="CHEBI:16526"/>
        <dbReference type="ChEBI" id="CHEBI:28938"/>
        <dbReference type="ChEBI" id="CHEBI:59891"/>
        <dbReference type="ChEBI" id="CHEBI:59894"/>
        <dbReference type="EC" id="3.5.1.110"/>
    </reaction>
</comment>
<comment type="catalytic activity">
    <reaction evidence="1">
        <text>(Z)-3-ureidoacrylate + H2O = (Z)-3-aminoacrylate + carbamate + H(+)</text>
        <dbReference type="Rhea" id="RHEA:31603"/>
        <dbReference type="ChEBI" id="CHEBI:13941"/>
        <dbReference type="ChEBI" id="CHEBI:15377"/>
        <dbReference type="ChEBI" id="CHEBI:15378"/>
        <dbReference type="ChEBI" id="CHEBI:59891"/>
        <dbReference type="ChEBI" id="CHEBI:59894"/>
    </reaction>
</comment>
<comment type="catalytic activity">
    <reaction evidence="1">
        <text>(Z)-2-methylureidoacrylate + H2O + H(+) = (Z)-2-methylaminoacrylate + NH4(+) + CO2</text>
        <dbReference type="Rhea" id="RHEA:42620"/>
        <dbReference type="ChEBI" id="CHEBI:15377"/>
        <dbReference type="ChEBI" id="CHEBI:15378"/>
        <dbReference type="ChEBI" id="CHEBI:16526"/>
        <dbReference type="ChEBI" id="CHEBI:28938"/>
        <dbReference type="ChEBI" id="CHEBI:143783"/>
        <dbReference type="ChEBI" id="CHEBI:145735"/>
        <dbReference type="EC" id="3.5.1.110"/>
    </reaction>
</comment>
<comment type="induction">
    <text evidence="1">Up-regulated by the nitrogen regulatory protein C (NtrC also called GlnG) and repressed by RutR.</text>
</comment>
<comment type="similarity">
    <text evidence="1">Belongs to the isochorismatase family. RutB subfamily.</text>
</comment>